<comment type="function">
    <text evidence="1">Catalyzes the ATP-dependent 2-thiolation of cytidine in position 32 of tRNA, to form 2-thiocytidine (s(2)C32). The sulfur atoms are provided by the cysteine/cysteine desulfurase (IscS) system.</text>
</comment>
<comment type="catalytic activity">
    <reaction evidence="1">
        <text>cytidine(32) in tRNA + S-sulfanyl-L-cysteinyl-[cysteine desulfurase] + AH2 + ATP = 2-thiocytidine(32) in tRNA + L-cysteinyl-[cysteine desulfurase] + A + AMP + diphosphate + H(+)</text>
        <dbReference type="Rhea" id="RHEA:57048"/>
        <dbReference type="Rhea" id="RHEA-COMP:10288"/>
        <dbReference type="Rhea" id="RHEA-COMP:12157"/>
        <dbReference type="Rhea" id="RHEA-COMP:12158"/>
        <dbReference type="Rhea" id="RHEA-COMP:14821"/>
        <dbReference type="ChEBI" id="CHEBI:13193"/>
        <dbReference type="ChEBI" id="CHEBI:15378"/>
        <dbReference type="ChEBI" id="CHEBI:17499"/>
        <dbReference type="ChEBI" id="CHEBI:29950"/>
        <dbReference type="ChEBI" id="CHEBI:30616"/>
        <dbReference type="ChEBI" id="CHEBI:33019"/>
        <dbReference type="ChEBI" id="CHEBI:61963"/>
        <dbReference type="ChEBI" id="CHEBI:82748"/>
        <dbReference type="ChEBI" id="CHEBI:141453"/>
        <dbReference type="ChEBI" id="CHEBI:456215"/>
    </reaction>
    <physiologicalReaction direction="left-to-right" evidence="1">
        <dbReference type="Rhea" id="RHEA:57049"/>
    </physiologicalReaction>
</comment>
<comment type="cofactor">
    <cofactor evidence="1">
        <name>Mg(2+)</name>
        <dbReference type="ChEBI" id="CHEBI:18420"/>
    </cofactor>
</comment>
<comment type="cofactor">
    <cofactor evidence="1">
        <name>[4Fe-4S] cluster</name>
        <dbReference type="ChEBI" id="CHEBI:49883"/>
    </cofactor>
    <text evidence="1">Binds 1 [4Fe-4S] cluster per subunit. The cluster is chelated by three Cys residues, the fourth Fe has a free coordination site that may bind a sulfur atom transferred from the persulfide of IscS.</text>
</comment>
<comment type="pathway">
    <text evidence="1">tRNA modification.</text>
</comment>
<comment type="subunit">
    <text evidence="1">Homodimer.</text>
</comment>
<comment type="subcellular location">
    <subcellularLocation>
        <location evidence="1">Cytoplasm</location>
    </subcellularLocation>
</comment>
<comment type="miscellaneous">
    <text evidence="1">The thiolation reaction likely consists of two steps: a first activation step by ATP to form an adenylated intermediate of the target base of tRNA, and a second nucleophilic substitution step of the sulfur (S) atom supplied by the hydrosulfide attached to the Fe-S cluster.</text>
</comment>
<comment type="similarity">
    <text evidence="1">Belongs to the TtcA family.</text>
</comment>
<reference key="1">
    <citation type="submission" date="2006-12" db="EMBL/GenBank/DDBJ databases">
        <title>Complete sequence of Acidovorax avenae subsp. citrulli AAC00-1.</title>
        <authorList>
            <person name="Copeland A."/>
            <person name="Lucas S."/>
            <person name="Lapidus A."/>
            <person name="Barry K."/>
            <person name="Detter J.C."/>
            <person name="Glavina del Rio T."/>
            <person name="Dalin E."/>
            <person name="Tice H."/>
            <person name="Pitluck S."/>
            <person name="Kiss H."/>
            <person name="Brettin T."/>
            <person name="Bruce D."/>
            <person name="Han C."/>
            <person name="Tapia R."/>
            <person name="Gilna P."/>
            <person name="Schmutz J."/>
            <person name="Larimer F."/>
            <person name="Land M."/>
            <person name="Hauser L."/>
            <person name="Kyrpides N."/>
            <person name="Kim E."/>
            <person name="Stahl D."/>
            <person name="Richardson P."/>
        </authorList>
    </citation>
    <scope>NUCLEOTIDE SEQUENCE [LARGE SCALE GENOMIC DNA]</scope>
    <source>
        <strain>AAC00-1</strain>
    </source>
</reference>
<evidence type="ECO:0000255" key="1">
    <source>
        <dbReference type="HAMAP-Rule" id="MF_01850"/>
    </source>
</evidence>
<accession>A1TUY3</accession>
<keyword id="KW-0004">4Fe-4S</keyword>
<keyword id="KW-0067">ATP-binding</keyword>
<keyword id="KW-0963">Cytoplasm</keyword>
<keyword id="KW-0408">Iron</keyword>
<keyword id="KW-0411">Iron-sulfur</keyword>
<keyword id="KW-0460">Magnesium</keyword>
<keyword id="KW-0479">Metal-binding</keyword>
<keyword id="KW-0547">Nucleotide-binding</keyword>
<keyword id="KW-0694">RNA-binding</keyword>
<keyword id="KW-0808">Transferase</keyword>
<keyword id="KW-0819">tRNA processing</keyword>
<keyword id="KW-0820">tRNA-binding</keyword>
<gene>
    <name evidence="1" type="primary">ttcA</name>
    <name type="ordered locus">Aave_4231</name>
</gene>
<organism>
    <name type="scientific">Paracidovorax citrulli (strain AAC00-1)</name>
    <name type="common">Acidovorax citrulli</name>
    <dbReference type="NCBI Taxonomy" id="397945"/>
    <lineage>
        <taxon>Bacteria</taxon>
        <taxon>Pseudomonadati</taxon>
        <taxon>Pseudomonadota</taxon>
        <taxon>Betaproteobacteria</taxon>
        <taxon>Burkholderiales</taxon>
        <taxon>Comamonadaceae</taxon>
        <taxon>Paracidovorax</taxon>
    </lineage>
</organism>
<proteinExistence type="inferred from homology"/>
<name>TTCA_PARC0</name>
<dbReference type="EC" id="2.8.1.-" evidence="1"/>
<dbReference type="EMBL" id="CP000512">
    <property type="protein sequence ID" value="ABM34771.1"/>
    <property type="molecule type" value="Genomic_DNA"/>
</dbReference>
<dbReference type="RefSeq" id="WP_011797245.1">
    <property type="nucleotide sequence ID" value="NC_008752.1"/>
</dbReference>
<dbReference type="SMR" id="A1TUY3"/>
<dbReference type="STRING" id="397945.Aave_4231"/>
<dbReference type="GeneID" id="79789198"/>
<dbReference type="KEGG" id="aav:Aave_4231"/>
<dbReference type="eggNOG" id="COG0037">
    <property type="taxonomic scope" value="Bacteria"/>
</dbReference>
<dbReference type="HOGENOM" id="CLU_026481_0_0_4"/>
<dbReference type="OrthoDB" id="9801054at2"/>
<dbReference type="Proteomes" id="UP000002596">
    <property type="component" value="Chromosome"/>
</dbReference>
<dbReference type="GO" id="GO:0005737">
    <property type="term" value="C:cytoplasm"/>
    <property type="evidence" value="ECO:0007669"/>
    <property type="project" value="UniProtKB-SubCell"/>
</dbReference>
<dbReference type="GO" id="GO:0051539">
    <property type="term" value="F:4 iron, 4 sulfur cluster binding"/>
    <property type="evidence" value="ECO:0007669"/>
    <property type="project" value="UniProtKB-UniRule"/>
</dbReference>
<dbReference type="GO" id="GO:0005524">
    <property type="term" value="F:ATP binding"/>
    <property type="evidence" value="ECO:0007669"/>
    <property type="project" value="UniProtKB-UniRule"/>
</dbReference>
<dbReference type="GO" id="GO:0000287">
    <property type="term" value="F:magnesium ion binding"/>
    <property type="evidence" value="ECO:0007669"/>
    <property type="project" value="UniProtKB-UniRule"/>
</dbReference>
<dbReference type="GO" id="GO:0016783">
    <property type="term" value="F:sulfurtransferase activity"/>
    <property type="evidence" value="ECO:0007669"/>
    <property type="project" value="UniProtKB-UniRule"/>
</dbReference>
<dbReference type="GO" id="GO:0000049">
    <property type="term" value="F:tRNA binding"/>
    <property type="evidence" value="ECO:0007669"/>
    <property type="project" value="UniProtKB-KW"/>
</dbReference>
<dbReference type="GO" id="GO:0034227">
    <property type="term" value="P:tRNA thio-modification"/>
    <property type="evidence" value="ECO:0007669"/>
    <property type="project" value="UniProtKB-UniRule"/>
</dbReference>
<dbReference type="CDD" id="cd24138">
    <property type="entry name" value="TtcA-like"/>
    <property type="match status" value="1"/>
</dbReference>
<dbReference type="Gene3D" id="3.40.50.620">
    <property type="entry name" value="HUPs"/>
    <property type="match status" value="1"/>
</dbReference>
<dbReference type="HAMAP" id="MF_01850">
    <property type="entry name" value="TtcA"/>
    <property type="match status" value="1"/>
</dbReference>
<dbReference type="InterPro" id="IPR014729">
    <property type="entry name" value="Rossmann-like_a/b/a_fold"/>
</dbReference>
<dbReference type="InterPro" id="IPR011063">
    <property type="entry name" value="TilS/TtcA_N"/>
</dbReference>
<dbReference type="InterPro" id="IPR012089">
    <property type="entry name" value="tRNA_Cyd_32_2_STrfase"/>
</dbReference>
<dbReference type="InterPro" id="IPR035107">
    <property type="entry name" value="tRNA_thiolation_TtcA_Ctu1"/>
</dbReference>
<dbReference type="NCBIfam" id="NF007972">
    <property type="entry name" value="PRK10696.1"/>
    <property type="match status" value="1"/>
</dbReference>
<dbReference type="PANTHER" id="PTHR43686:SF1">
    <property type="entry name" value="AMINOTRAN_5 DOMAIN-CONTAINING PROTEIN"/>
    <property type="match status" value="1"/>
</dbReference>
<dbReference type="PANTHER" id="PTHR43686">
    <property type="entry name" value="SULFURTRANSFERASE-RELATED"/>
    <property type="match status" value="1"/>
</dbReference>
<dbReference type="Pfam" id="PF01171">
    <property type="entry name" value="ATP_bind_3"/>
    <property type="match status" value="1"/>
</dbReference>
<dbReference type="PIRSF" id="PIRSF004976">
    <property type="entry name" value="ATPase_YdaO"/>
    <property type="match status" value="1"/>
</dbReference>
<dbReference type="SUPFAM" id="SSF52402">
    <property type="entry name" value="Adenine nucleotide alpha hydrolases-like"/>
    <property type="match status" value="1"/>
</dbReference>
<sequence length="310" mass="34946">MTALPQDTDWTADASRPAQARIEREAHKLEKRLCREVGRAIVDYRMIEEGDKVMVCMSGGKDSYTLLDILIKLQKRAPIHFDLVAVNLDQKQPGFPEHILPEYLAATGVPFHIENQDTYSIVKRVVPEGKTTCGLCSRLRRGILYRVADELGCTKIALGHHRDDILQTLLLNMFFGGKMKAMPPKLVSDDGRHVVIRPLAYVPEKDTTRWAQQRQFPIIPCNLCGSQENLQRKQVGEMLRDWDKRFPGRVDNMFNALQNIVPSHLMDGTLHDFQHLKATGIASDDGDKAFDAEEFPPAPALPGLQVVQIS</sequence>
<protein>
    <recommendedName>
        <fullName evidence="1">tRNA-cytidine(32) 2-sulfurtransferase</fullName>
        <ecNumber evidence="1">2.8.1.-</ecNumber>
    </recommendedName>
    <alternativeName>
        <fullName evidence="1">Two-thiocytidine biosynthesis protein A</fullName>
    </alternativeName>
    <alternativeName>
        <fullName evidence="1">tRNA 2-thiocytidine biosynthesis protein TtcA</fullName>
    </alternativeName>
</protein>
<feature type="chain" id="PRO_0000348645" description="tRNA-cytidine(32) 2-sulfurtransferase">
    <location>
        <begin position="1"/>
        <end position="310"/>
    </location>
</feature>
<feature type="short sequence motif" description="PP-loop motif" evidence="1">
    <location>
        <begin position="58"/>
        <end position="63"/>
    </location>
</feature>
<feature type="binding site" evidence="1">
    <location>
        <position position="133"/>
    </location>
    <ligand>
        <name>[4Fe-4S] cluster</name>
        <dbReference type="ChEBI" id="CHEBI:49883"/>
    </ligand>
</feature>
<feature type="binding site" evidence="1">
    <location>
        <position position="136"/>
    </location>
    <ligand>
        <name>[4Fe-4S] cluster</name>
        <dbReference type="ChEBI" id="CHEBI:49883"/>
    </ligand>
</feature>
<feature type="binding site" evidence="1">
    <location>
        <position position="224"/>
    </location>
    <ligand>
        <name>[4Fe-4S] cluster</name>
        <dbReference type="ChEBI" id="CHEBI:49883"/>
    </ligand>
</feature>